<sequence>MVRIAINGFGRIGRLVLRIALSRKNIEVVAINDPFITVDYAAYMFKYDSTHGRFDGEVSHDGKALIIDGKKVLVFQERDPATLPWGAEKIDIAIDSTGIFKELDSAQKHIDAGAKKVVITAPSSTAPMFVVGVNEDKYAGQTIVSNASCTTNCLAPLAKIINNAFGIEEGLMTTVHSITATQKTVDGPSHKDWRGGRTASGNIIPSSTGAAKAVGKVLPELQGKLTGMAFRVPTVDVSVVDLTVKLAKPATYEEIKAVVKKASENELKGVMGYTEDAVVSSDFLGDTHSSIFDAAAGIQLSPQFVKLVSWYDNEFGYSTRVVDLVELVAKN</sequence>
<evidence type="ECO:0000250" key="1">
    <source>
        <dbReference type="UniProtKB" id="P00359"/>
    </source>
</evidence>
<evidence type="ECO:0000250" key="2">
    <source>
        <dbReference type="UniProtKB" id="P22513"/>
    </source>
</evidence>
<evidence type="ECO:0000255" key="3"/>
<evidence type="ECO:0000255" key="4">
    <source>
        <dbReference type="PROSITE-ProRule" id="PRU10009"/>
    </source>
</evidence>
<evidence type="ECO:0000269" key="5">
    <source>
    </source>
</evidence>
<evidence type="ECO:0000303" key="6">
    <source>
    </source>
</evidence>
<evidence type="ECO:0000305" key="7"/>
<protein>
    <recommendedName>
        <fullName>Glyceraldehyde-3-phosphate dehydrogenase 3</fullName>
        <shortName>GAPDH 3</shortName>
        <ecNumber>1.2.1.12</ecNumber>
    </recommendedName>
</protein>
<name>G3P3_KLUMA</name>
<gene>
    <name evidence="6" type="primary">GAP3</name>
</gene>
<accession>P84999</accession>
<feature type="chain" id="PRO_0000253991" description="Glyceraldehyde-3-phosphate dehydrogenase 3">
    <location>
        <begin position="1"/>
        <end position="331"/>
    </location>
</feature>
<feature type="active site" description="Nucleophile" evidence="2 4">
    <location>
        <position position="149"/>
    </location>
</feature>
<feature type="binding site" evidence="2">
    <location>
        <begin position="11"/>
        <end position="12"/>
    </location>
    <ligand>
        <name>NAD(+)</name>
        <dbReference type="ChEBI" id="CHEBI:57540"/>
    </ligand>
</feature>
<feature type="binding site" evidence="2">
    <location>
        <position position="33"/>
    </location>
    <ligand>
        <name>NAD(+)</name>
        <dbReference type="ChEBI" id="CHEBI:57540"/>
    </ligand>
</feature>
<feature type="binding site" evidence="2">
    <location>
        <position position="77"/>
    </location>
    <ligand>
        <name>NAD(+)</name>
        <dbReference type="ChEBI" id="CHEBI:57540"/>
    </ligand>
</feature>
<feature type="binding site" evidence="2">
    <location>
        <begin position="148"/>
        <end position="150"/>
    </location>
    <ligand>
        <name>D-glyceraldehyde 3-phosphate</name>
        <dbReference type="ChEBI" id="CHEBI:59776"/>
    </ligand>
</feature>
<feature type="binding site" evidence="2">
    <location>
        <position position="179"/>
    </location>
    <ligand>
        <name>D-glyceraldehyde 3-phosphate</name>
        <dbReference type="ChEBI" id="CHEBI:59776"/>
    </ligand>
</feature>
<feature type="binding site" evidence="2">
    <location>
        <begin position="208"/>
        <end position="209"/>
    </location>
    <ligand>
        <name>D-glyceraldehyde 3-phosphate</name>
        <dbReference type="ChEBI" id="CHEBI:59776"/>
    </ligand>
</feature>
<feature type="binding site" evidence="2">
    <location>
        <position position="231"/>
    </location>
    <ligand>
        <name>D-glyceraldehyde 3-phosphate</name>
        <dbReference type="ChEBI" id="CHEBI:59776"/>
    </ligand>
</feature>
<feature type="binding site" evidence="2">
    <location>
        <position position="313"/>
    </location>
    <ligand>
        <name>NAD(+)</name>
        <dbReference type="ChEBI" id="CHEBI:57540"/>
    </ligand>
</feature>
<feature type="site" description="Activates thiol group during catalysis" evidence="2">
    <location>
        <position position="176"/>
    </location>
</feature>
<feature type="modified residue" description="Phosphoserine" evidence="1">
    <location>
        <position position="148"/>
    </location>
</feature>
<feature type="modified residue" description="Phosphoserine" evidence="1">
    <location>
        <position position="177"/>
    </location>
</feature>
<feature type="modified residue" description="Phosphoserine" evidence="1">
    <location>
        <position position="200"/>
    </location>
</feature>
<dbReference type="EC" id="1.2.1.12"/>
<dbReference type="PIR" id="S57281">
    <property type="entry name" value="S57281"/>
</dbReference>
<dbReference type="SMR" id="P84999"/>
<dbReference type="VEuPathDB" id="FungiDB:KLMA_80059"/>
<dbReference type="UniPathway" id="UPA00109">
    <property type="reaction ID" value="UER00184"/>
</dbReference>
<dbReference type="GO" id="GO:0005829">
    <property type="term" value="C:cytosol"/>
    <property type="evidence" value="ECO:0007669"/>
    <property type="project" value="UniProtKB-ARBA"/>
</dbReference>
<dbReference type="GO" id="GO:0030312">
    <property type="term" value="C:external encapsulating structure"/>
    <property type="evidence" value="ECO:0007669"/>
    <property type="project" value="UniProtKB-ARBA"/>
</dbReference>
<dbReference type="GO" id="GO:0004365">
    <property type="term" value="F:glyceraldehyde-3-phosphate dehydrogenase (NAD+) (phosphorylating) activity"/>
    <property type="evidence" value="ECO:0007669"/>
    <property type="project" value="UniProtKB-EC"/>
</dbReference>
<dbReference type="GO" id="GO:0051287">
    <property type="term" value="F:NAD binding"/>
    <property type="evidence" value="ECO:0007669"/>
    <property type="project" value="InterPro"/>
</dbReference>
<dbReference type="GO" id="GO:0050661">
    <property type="term" value="F:NADP binding"/>
    <property type="evidence" value="ECO:0007669"/>
    <property type="project" value="InterPro"/>
</dbReference>
<dbReference type="GO" id="GO:0006006">
    <property type="term" value="P:glucose metabolic process"/>
    <property type="evidence" value="ECO:0007669"/>
    <property type="project" value="InterPro"/>
</dbReference>
<dbReference type="GO" id="GO:0006096">
    <property type="term" value="P:glycolytic process"/>
    <property type="evidence" value="ECO:0007669"/>
    <property type="project" value="UniProtKB-UniPathway"/>
</dbReference>
<dbReference type="CDD" id="cd18126">
    <property type="entry name" value="GAPDH_I_C"/>
    <property type="match status" value="1"/>
</dbReference>
<dbReference type="CDD" id="cd05214">
    <property type="entry name" value="GAPDH_I_N"/>
    <property type="match status" value="1"/>
</dbReference>
<dbReference type="FunFam" id="3.30.360.10:FF:000001">
    <property type="entry name" value="Glyceraldehyde-3-phosphate dehydrogenase"/>
    <property type="match status" value="1"/>
</dbReference>
<dbReference type="FunFam" id="3.40.50.720:FF:000020">
    <property type="entry name" value="Glyceraldehyde-3-phosphate dehydrogenase"/>
    <property type="match status" value="1"/>
</dbReference>
<dbReference type="Gene3D" id="3.30.360.10">
    <property type="entry name" value="Dihydrodipicolinate Reductase, domain 2"/>
    <property type="match status" value="1"/>
</dbReference>
<dbReference type="Gene3D" id="3.40.50.720">
    <property type="entry name" value="NAD(P)-binding Rossmann-like Domain"/>
    <property type="match status" value="1"/>
</dbReference>
<dbReference type="InterPro" id="IPR020831">
    <property type="entry name" value="GlycerAld/Erythrose_P_DH"/>
</dbReference>
<dbReference type="InterPro" id="IPR020830">
    <property type="entry name" value="GlycerAld_3-P_DH_AS"/>
</dbReference>
<dbReference type="InterPro" id="IPR020829">
    <property type="entry name" value="GlycerAld_3-P_DH_cat"/>
</dbReference>
<dbReference type="InterPro" id="IPR020828">
    <property type="entry name" value="GlycerAld_3-P_DH_NAD(P)-bd"/>
</dbReference>
<dbReference type="InterPro" id="IPR006424">
    <property type="entry name" value="Glyceraldehyde-3-P_DH_1"/>
</dbReference>
<dbReference type="InterPro" id="IPR036291">
    <property type="entry name" value="NAD(P)-bd_dom_sf"/>
</dbReference>
<dbReference type="NCBIfam" id="TIGR01534">
    <property type="entry name" value="GAPDH-I"/>
    <property type="match status" value="1"/>
</dbReference>
<dbReference type="PANTHER" id="PTHR10836">
    <property type="entry name" value="GLYCERALDEHYDE 3-PHOSPHATE DEHYDROGENASE"/>
    <property type="match status" value="1"/>
</dbReference>
<dbReference type="PANTHER" id="PTHR10836:SF76">
    <property type="entry name" value="GLYCERALDEHYDE-3-PHOSPHATE DEHYDROGENASE-RELATED"/>
    <property type="match status" value="1"/>
</dbReference>
<dbReference type="Pfam" id="PF02800">
    <property type="entry name" value="Gp_dh_C"/>
    <property type="match status" value="1"/>
</dbReference>
<dbReference type="Pfam" id="PF00044">
    <property type="entry name" value="Gp_dh_N"/>
    <property type="match status" value="1"/>
</dbReference>
<dbReference type="PIRSF" id="PIRSF000149">
    <property type="entry name" value="GAP_DH"/>
    <property type="match status" value="1"/>
</dbReference>
<dbReference type="PRINTS" id="PR00078">
    <property type="entry name" value="G3PDHDRGNASE"/>
</dbReference>
<dbReference type="SMART" id="SM00846">
    <property type="entry name" value="Gp_dh_N"/>
    <property type="match status" value="1"/>
</dbReference>
<dbReference type="SUPFAM" id="SSF55347">
    <property type="entry name" value="Glyceraldehyde-3-phosphate dehydrogenase-like, C-terminal domain"/>
    <property type="match status" value="1"/>
</dbReference>
<dbReference type="SUPFAM" id="SSF51735">
    <property type="entry name" value="NAD(P)-binding Rossmann-fold domains"/>
    <property type="match status" value="1"/>
</dbReference>
<dbReference type="PROSITE" id="PS00071">
    <property type="entry name" value="GAPDH"/>
    <property type="match status" value="1"/>
</dbReference>
<proteinExistence type="evidence at protein level"/>
<organism>
    <name type="scientific">Kluyveromyces marxianus</name>
    <name type="common">Yeast</name>
    <name type="synonym">Candida kefyr</name>
    <dbReference type="NCBI Taxonomy" id="4911"/>
    <lineage>
        <taxon>Eukaryota</taxon>
        <taxon>Fungi</taxon>
        <taxon>Dikarya</taxon>
        <taxon>Ascomycota</taxon>
        <taxon>Saccharomycotina</taxon>
        <taxon>Saccharomycetes</taxon>
        <taxon>Saccharomycetales</taxon>
        <taxon>Saccharomycetaceae</taxon>
        <taxon>Kluyveromyces</taxon>
    </lineage>
</organism>
<reference evidence="7" key="1">
    <citation type="journal article" date="1995" name="Yeast">
        <title>Characterization of the glyceraldehyde-3-phosphate dehydrogenase gene family from Kluyveromyces marxianus -- polymerase chain reaction-single-strand conformation polymorphism as a tool for the study of multigenic families.</title>
        <authorList>
            <person name="Fernandes P.A."/>
            <person name="Sena-Esteves M."/>
            <person name="Moradas-Ferreira P."/>
        </authorList>
    </citation>
    <scope>NUCLEOTIDE SEQUENCE [GENOMIC DNA]</scope>
    <scope>CATALYTIC ACTIVITY</scope>
    <scope>PATHWAY</scope>
    <source>
        <strain evidence="5">ATCC 10022 / CBS 6432 / NCTC 2303 / NRRL Y-665</strain>
    </source>
</reference>
<keyword id="KW-0963">Cytoplasm</keyword>
<keyword id="KW-0324">Glycolysis</keyword>
<keyword id="KW-0520">NAD</keyword>
<keyword id="KW-0560">Oxidoreductase</keyword>
<keyword id="KW-0597">Phosphoprotein</keyword>
<comment type="catalytic activity">
    <reaction evidence="4 5">
        <text>D-glyceraldehyde 3-phosphate + phosphate + NAD(+) = (2R)-3-phospho-glyceroyl phosphate + NADH + H(+)</text>
        <dbReference type="Rhea" id="RHEA:10300"/>
        <dbReference type="ChEBI" id="CHEBI:15378"/>
        <dbReference type="ChEBI" id="CHEBI:43474"/>
        <dbReference type="ChEBI" id="CHEBI:57540"/>
        <dbReference type="ChEBI" id="CHEBI:57604"/>
        <dbReference type="ChEBI" id="CHEBI:57945"/>
        <dbReference type="ChEBI" id="CHEBI:59776"/>
        <dbReference type="EC" id="1.2.1.12"/>
    </reaction>
</comment>
<comment type="pathway">
    <text evidence="5">Carbohydrate degradation; glycolysis; pyruvate from D-glyceraldehyde 3-phosphate: step 1/5.</text>
</comment>
<comment type="subunit">
    <text evidence="2">Homotetramer.</text>
</comment>
<comment type="subcellular location">
    <subcellularLocation>
        <location evidence="1">Cytoplasm</location>
    </subcellularLocation>
</comment>
<comment type="similarity">
    <text evidence="3">Belongs to the glyceraldehyde-3-phosphate dehydrogenase family.</text>
</comment>